<sequence length="290" mass="32827">MNFIIATRRSKLAQVQTEIIIDLLNKKHDIECEKLLIETVGDKILEVSLDKIGGKGLFVKDIEVAMLEQRADAAVHSMKDVPYEMPKGFEIIAIPEREDVRDAFISLDNIKFKDLREGAKIGTSSRRRAAQLKLLRSDLDIVPIRGNVQTRIEKIKKENLDGIILAVAGLKRVNLDHLITDYFDTKEMVPAIGQGALGIEVMEEHPKKELFKDLDHYNSKICVLAERAFMRELDGDCHSTIGAYASIKDNIMHIIGIFERKNKIIKKEITGTKDQYEKLGIALAEHILKD</sequence>
<gene>
    <name evidence="1" type="primary">hemC</name>
    <name type="ordered locus">CLJ_B0971</name>
</gene>
<name>HEM3_CLOB6</name>
<protein>
    <recommendedName>
        <fullName evidence="1">Porphobilinogen deaminase</fullName>
        <shortName evidence="1">PBG</shortName>
        <ecNumber evidence="1">2.5.1.61</ecNumber>
    </recommendedName>
    <alternativeName>
        <fullName evidence="1">Hydroxymethylbilane synthase</fullName>
        <shortName evidence="1">HMBS</shortName>
    </alternativeName>
    <alternativeName>
        <fullName evidence="1">Pre-uroporphyrinogen synthase</fullName>
    </alternativeName>
</protein>
<organism>
    <name type="scientific">Clostridium botulinum (strain 657 / Type Ba4)</name>
    <dbReference type="NCBI Taxonomy" id="515621"/>
    <lineage>
        <taxon>Bacteria</taxon>
        <taxon>Bacillati</taxon>
        <taxon>Bacillota</taxon>
        <taxon>Clostridia</taxon>
        <taxon>Eubacteriales</taxon>
        <taxon>Clostridiaceae</taxon>
        <taxon>Clostridium</taxon>
    </lineage>
</organism>
<dbReference type="EC" id="2.5.1.61" evidence="1"/>
<dbReference type="EMBL" id="CP001083">
    <property type="protein sequence ID" value="ACQ54939.1"/>
    <property type="molecule type" value="Genomic_DNA"/>
</dbReference>
<dbReference type="RefSeq" id="WP_003360878.1">
    <property type="nucleotide sequence ID" value="NC_012658.1"/>
</dbReference>
<dbReference type="SMR" id="C3L2Z3"/>
<dbReference type="KEGG" id="cbi:CLJ_B0971"/>
<dbReference type="HOGENOM" id="CLU_019704_0_2_9"/>
<dbReference type="UniPathway" id="UPA00251">
    <property type="reaction ID" value="UER00319"/>
</dbReference>
<dbReference type="Proteomes" id="UP000002333">
    <property type="component" value="Chromosome"/>
</dbReference>
<dbReference type="GO" id="GO:0005737">
    <property type="term" value="C:cytoplasm"/>
    <property type="evidence" value="ECO:0007669"/>
    <property type="project" value="TreeGrafter"/>
</dbReference>
<dbReference type="GO" id="GO:0004418">
    <property type="term" value="F:hydroxymethylbilane synthase activity"/>
    <property type="evidence" value="ECO:0007669"/>
    <property type="project" value="UniProtKB-UniRule"/>
</dbReference>
<dbReference type="GO" id="GO:0006782">
    <property type="term" value="P:protoporphyrinogen IX biosynthetic process"/>
    <property type="evidence" value="ECO:0007669"/>
    <property type="project" value="UniProtKB-UniRule"/>
</dbReference>
<dbReference type="FunFam" id="3.40.190.10:FF:000005">
    <property type="entry name" value="Porphobilinogen deaminase"/>
    <property type="match status" value="1"/>
</dbReference>
<dbReference type="Gene3D" id="3.40.190.10">
    <property type="entry name" value="Periplasmic binding protein-like II"/>
    <property type="match status" value="2"/>
</dbReference>
<dbReference type="Gene3D" id="3.30.160.40">
    <property type="entry name" value="Porphobilinogen deaminase, C-terminal domain"/>
    <property type="match status" value="1"/>
</dbReference>
<dbReference type="HAMAP" id="MF_00260">
    <property type="entry name" value="Porphobil_deam"/>
    <property type="match status" value="1"/>
</dbReference>
<dbReference type="InterPro" id="IPR000860">
    <property type="entry name" value="HemC"/>
</dbReference>
<dbReference type="InterPro" id="IPR022417">
    <property type="entry name" value="Porphobilin_deaminase_N"/>
</dbReference>
<dbReference type="InterPro" id="IPR022418">
    <property type="entry name" value="Porphobilinogen_deaminase_C"/>
</dbReference>
<dbReference type="InterPro" id="IPR036803">
    <property type="entry name" value="Porphobilinogen_deaminase_C_sf"/>
</dbReference>
<dbReference type="NCBIfam" id="TIGR00212">
    <property type="entry name" value="hemC"/>
    <property type="match status" value="1"/>
</dbReference>
<dbReference type="PANTHER" id="PTHR11557">
    <property type="entry name" value="PORPHOBILINOGEN DEAMINASE"/>
    <property type="match status" value="1"/>
</dbReference>
<dbReference type="PANTHER" id="PTHR11557:SF0">
    <property type="entry name" value="PORPHOBILINOGEN DEAMINASE"/>
    <property type="match status" value="1"/>
</dbReference>
<dbReference type="Pfam" id="PF01379">
    <property type="entry name" value="Porphobil_deam"/>
    <property type="match status" value="1"/>
</dbReference>
<dbReference type="Pfam" id="PF03900">
    <property type="entry name" value="Porphobil_deamC"/>
    <property type="match status" value="1"/>
</dbReference>
<dbReference type="PIRSF" id="PIRSF001438">
    <property type="entry name" value="4pyrrol_synth_OHMeBilane_synth"/>
    <property type="match status" value="1"/>
</dbReference>
<dbReference type="PRINTS" id="PR00151">
    <property type="entry name" value="PORPHBDMNASE"/>
</dbReference>
<dbReference type="SUPFAM" id="SSF53850">
    <property type="entry name" value="Periplasmic binding protein-like II"/>
    <property type="match status" value="1"/>
</dbReference>
<dbReference type="SUPFAM" id="SSF54782">
    <property type="entry name" value="Porphobilinogen deaminase (hydroxymethylbilane synthase), C-terminal domain"/>
    <property type="match status" value="1"/>
</dbReference>
<evidence type="ECO:0000255" key="1">
    <source>
        <dbReference type="HAMAP-Rule" id="MF_00260"/>
    </source>
</evidence>
<comment type="function">
    <text evidence="1">Tetrapolymerization of the monopyrrole PBG into the hydroxymethylbilane pre-uroporphyrinogen in several discrete steps.</text>
</comment>
<comment type="catalytic activity">
    <reaction evidence="1">
        <text>4 porphobilinogen + H2O = hydroxymethylbilane + 4 NH4(+)</text>
        <dbReference type="Rhea" id="RHEA:13185"/>
        <dbReference type="ChEBI" id="CHEBI:15377"/>
        <dbReference type="ChEBI" id="CHEBI:28938"/>
        <dbReference type="ChEBI" id="CHEBI:57845"/>
        <dbReference type="ChEBI" id="CHEBI:58126"/>
        <dbReference type="EC" id="2.5.1.61"/>
    </reaction>
</comment>
<comment type="cofactor">
    <cofactor evidence="1">
        <name>dipyrromethane</name>
        <dbReference type="ChEBI" id="CHEBI:60342"/>
    </cofactor>
    <text evidence="1">Binds 1 dipyrromethane group covalently.</text>
</comment>
<comment type="pathway">
    <text evidence="1">Porphyrin-containing compound metabolism; protoporphyrin-IX biosynthesis; coproporphyrinogen-III from 5-aminolevulinate: step 2/4.</text>
</comment>
<comment type="subunit">
    <text evidence="1">Monomer.</text>
</comment>
<comment type="miscellaneous">
    <text evidence="1">The porphobilinogen subunits are added to the dipyrromethane group.</text>
</comment>
<comment type="similarity">
    <text evidence="1">Belongs to the HMBS family.</text>
</comment>
<reference key="1">
    <citation type="submission" date="2008-05" db="EMBL/GenBank/DDBJ databases">
        <title>Genome sequence of Clostridium botulinum Ba4 strain 657.</title>
        <authorList>
            <person name="Shrivastava S."/>
            <person name="Brown J.L."/>
            <person name="Bruce D."/>
            <person name="Detter C."/>
            <person name="Munk C."/>
            <person name="Smith L.A."/>
            <person name="Smith T.J."/>
            <person name="Sutton G."/>
            <person name="Brettin T.S."/>
        </authorList>
    </citation>
    <scope>NUCLEOTIDE SEQUENCE [LARGE SCALE GENOMIC DNA]</scope>
    <source>
        <strain>657 / Type Ba4</strain>
    </source>
</reference>
<keyword id="KW-0627">Porphyrin biosynthesis</keyword>
<keyword id="KW-0808">Transferase</keyword>
<accession>C3L2Z3</accession>
<feature type="chain" id="PRO_1000204647" description="Porphobilinogen deaminase">
    <location>
        <begin position="1"/>
        <end position="290"/>
    </location>
</feature>
<feature type="modified residue" description="S-(dipyrrolylmethanemethyl)cysteine" evidence="1">
    <location>
        <position position="237"/>
    </location>
</feature>
<proteinExistence type="inferred from homology"/>